<gene>
    <name evidence="1" type="primary">ssuD</name>
    <name type="ordered locus">ECS88_0963</name>
</gene>
<proteinExistence type="inferred from homology"/>
<protein>
    <recommendedName>
        <fullName evidence="1">Alkanesulfonate monooxygenase</fullName>
        <ecNumber evidence="1">1.14.14.5</ecNumber>
    </recommendedName>
    <alternativeName>
        <fullName evidence="1">FMNH2-dependent aliphatic sulfonate monooxygenase</fullName>
    </alternativeName>
</protein>
<comment type="function">
    <text evidence="1">Catalyzes the desulfonation of aliphatic sulfonates.</text>
</comment>
<comment type="catalytic activity">
    <reaction evidence="1">
        <text>an alkanesulfonate + FMNH2 + O2 = an aldehyde + FMN + sulfite + H2O + 2 H(+)</text>
        <dbReference type="Rhea" id="RHEA:23064"/>
        <dbReference type="ChEBI" id="CHEBI:15377"/>
        <dbReference type="ChEBI" id="CHEBI:15378"/>
        <dbReference type="ChEBI" id="CHEBI:15379"/>
        <dbReference type="ChEBI" id="CHEBI:17359"/>
        <dbReference type="ChEBI" id="CHEBI:17478"/>
        <dbReference type="ChEBI" id="CHEBI:57618"/>
        <dbReference type="ChEBI" id="CHEBI:58210"/>
        <dbReference type="ChEBI" id="CHEBI:134249"/>
        <dbReference type="EC" id="1.14.14.5"/>
    </reaction>
</comment>
<comment type="subunit">
    <text evidence="1">Homotetramer.</text>
</comment>
<comment type="miscellaneous">
    <text evidence="1">FMNH(2) which is absolutely required for this enzymatic reaction, is provided by SsuE.</text>
</comment>
<comment type="similarity">
    <text evidence="1">Belongs to the SsuD family.</text>
</comment>
<name>SSUD_ECO45</name>
<evidence type="ECO:0000255" key="1">
    <source>
        <dbReference type="HAMAP-Rule" id="MF_01229"/>
    </source>
</evidence>
<keyword id="KW-0285">Flavoprotein</keyword>
<keyword id="KW-0288">FMN</keyword>
<keyword id="KW-0503">Monooxygenase</keyword>
<keyword id="KW-0560">Oxidoreductase</keyword>
<keyword id="KW-1185">Reference proteome</keyword>
<reference key="1">
    <citation type="journal article" date="2009" name="PLoS Genet.">
        <title>Organised genome dynamics in the Escherichia coli species results in highly diverse adaptive paths.</title>
        <authorList>
            <person name="Touchon M."/>
            <person name="Hoede C."/>
            <person name="Tenaillon O."/>
            <person name="Barbe V."/>
            <person name="Baeriswyl S."/>
            <person name="Bidet P."/>
            <person name="Bingen E."/>
            <person name="Bonacorsi S."/>
            <person name="Bouchier C."/>
            <person name="Bouvet O."/>
            <person name="Calteau A."/>
            <person name="Chiapello H."/>
            <person name="Clermont O."/>
            <person name="Cruveiller S."/>
            <person name="Danchin A."/>
            <person name="Diard M."/>
            <person name="Dossat C."/>
            <person name="Karoui M.E."/>
            <person name="Frapy E."/>
            <person name="Garry L."/>
            <person name="Ghigo J.M."/>
            <person name="Gilles A.M."/>
            <person name="Johnson J."/>
            <person name="Le Bouguenec C."/>
            <person name="Lescat M."/>
            <person name="Mangenot S."/>
            <person name="Martinez-Jehanne V."/>
            <person name="Matic I."/>
            <person name="Nassif X."/>
            <person name="Oztas S."/>
            <person name="Petit M.A."/>
            <person name="Pichon C."/>
            <person name="Rouy Z."/>
            <person name="Ruf C.S."/>
            <person name="Schneider D."/>
            <person name="Tourret J."/>
            <person name="Vacherie B."/>
            <person name="Vallenet D."/>
            <person name="Medigue C."/>
            <person name="Rocha E.P.C."/>
            <person name="Denamur E."/>
        </authorList>
    </citation>
    <scope>NUCLEOTIDE SEQUENCE [LARGE SCALE GENOMIC DNA]</scope>
    <source>
        <strain>S88 / ExPEC</strain>
    </source>
</reference>
<organism>
    <name type="scientific">Escherichia coli O45:K1 (strain S88 / ExPEC)</name>
    <dbReference type="NCBI Taxonomy" id="585035"/>
    <lineage>
        <taxon>Bacteria</taxon>
        <taxon>Pseudomonadati</taxon>
        <taxon>Pseudomonadota</taxon>
        <taxon>Gammaproteobacteria</taxon>
        <taxon>Enterobacterales</taxon>
        <taxon>Enterobacteriaceae</taxon>
        <taxon>Escherichia</taxon>
    </lineage>
</organism>
<accession>B7MHP4</accession>
<dbReference type="EC" id="1.14.14.5" evidence="1"/>
<dbReference type="EMBL" id="CU928161">
    <property type="protein sequence ID" value="CAR02295.1"/>
    <property type="molecule type" value="Genomic_DNA"/>
</dbReference>
<dbReference type="RefSeq" id="WP_000055976.1">
    <property type="nucleotide sequence ID" value="NC_011742.1"/>
</dbReference>
<dbReference type="SMR" id="B7MHP4"/>
<dbReference type="KEGG" id="ecz:ECS88_0963"/>
<dbReference type="HOGENOM" id="CLU_027853_1_0_6"/>
<dbReference type="Proteomes" id="UP000000747">
    <property type="component" value="Chromosome"/>
</dbReference>
<dbReference type="GO" id="GO:0008726">
    <property type="term" value="F:alkanesulfonate monooxygenase activity"/>
    <property type="evidence" value="ECO:0007669"/>
    <property type="project" value="UniProtKB-UniRule"/>
</dbReference>
<dbReference type="GO" id="GO:0046306">
    <property type="term" value="P:alkanesulfonate catabolic process"/>
    <property type="evidence" value="ECO:0007669"/>
    <property type="project" value="TreeGrafter"/>
</dbReference>
<dbReference type="CDD" id="cd01094">
    <property type="entry name" value="Alkanesulfonate_monoxygenase"/>
    <property type="match status" value="1"/>
</dbReference>
<dbReference type="FunFam" id="3.20.20.30:FF:000001">
    <property type="entry name" value="Alkanesulfonate monooxygenase"/>
    <property type="match status" value="1"/>
</dbReference>
<dbReference type="Gene3D" id="3.20.20.30">
    <property type="entry name" value="Luciferase-like domain"/>
    <property type="match status" value="1"/>
</dbReference>
<dbReference type="HAMAP" id="MF_01229">
    <property type="entry name" value="Alkanesulf_monooxygen"/>
    <property type="match status" value="1"/>
</dbReference>
<dbReference type="InterPro" id="IPR019911">
    <property type="entry name" value="Alkanesulphonate_mOase_FMN-dep"/>
</dbReference>
<dbReference type="InterPro" id="IPR011251">
    <property type="entry name" value="Luciferase-like_dom"/>
</dbReference>
<dbReference type="InterPro" id="IPR036661">
    <property type="entry name" value="Luciferase-like_sf"/>
</dbReference>
<dbReference type="InterPro" id="IPR050172">
    <property type="entry name" value="SsuD_RutA_monooxygenase"/>
</dbReference>
<dbReference type="NCBIfam" id="TIGR03565">
    <property type="entry name" value="alk_sulf_monoox"/>
    <property type="match status" value="1"/>
</dbReference>
<dbReference type="NCBIfam" id="NF001939">
    <property type="entry name" value="PRK00719.1"/>
    <property type="match status" value="1"/>
</dbReference>
<dbReference type="PANTHER" id="PTHR42847">
    <property type="entry name" value="ALKANESULFONATE MONOOXYGENASE"/>
    <property type="match status" value="1"/>
</dbReference>
<dbReference type="PANTHER" id="PTHR42847:SF4">
    <property type="entry name" value="ALKANESULFONATE MONOOXYGENASE-RELATED"/>
    <property type="match status" value="1"/>
</dbReference>
<dbReference type="Pfam" id="PF00296">
    <property type="entry name" value="Bac_luciferase"/>
    <property type="match status" value="1"/>
</dbReference>
<dbReference type="SUPFAM" id="SSF51679">
    <property type="entry name" value="Bacterial luciferase-like"/>
    <property type="match status" value="1"/>
</dbReference>
<feature type="chain" id="PRO_1000139616" description="Alkanesulfonate monooxygenase">
    <location>
        <begin position="1"/>
        <end position="381"/>
    </location>
</feature>
<sequence length="381" mass="41672">MSLNMFWFLPTHGDGHYLGTEEGSRPVDHGYLQQIAQAADRLGYTGVLIPTGRSCEDAWLVAASMIPVTQRLKFLVALRPSVTSPTVAARQAATLDRLSNGRALFNLVTGSDPQELAGDGVFLDHSERYEASAEFTQVWRRLLLGETVDFNGKHIHVRGAKLLFPPIQQPYPPLYFGGSSDVAQELAAEQVDLYLTWGEPPELVKEKIEHVRAKAAAHGRKIRFGVRLHVIVRETNDEAWQAAERLISRLDDETIAKAQAAFARTDSVGQQRMAALHNGKRDNLEISPNLWAGVGLVRGGAGTALVGDGPTVAARINEYAALGIDSFVLSGYPHLEEAYRVGELLFPHLDVAIPEIPQPQPLNPQGEAVANDFIPRNVAQS</sequence>